<protein>
    <recommendedName>
        <fullName evidence="1">4-hydroxy-tetrahydrodipicolinate synthase</fullName>
        <shortName evidence="1">HTPA synthase</shortName>
        <ecNumber evidence="1">4.3.3.7</ecNumber>
    </recommendedName>
</protein>
<name>DAPA_BUCCC</name>
<dbReference type="EC" id="4.3.3.7" evidence="1"/>
<dbReference type="EMBL" id="CP000263">
    <property type="protein sequence ID" value="ABJ90538.1"/>
    <property type="molecule type" value="Genomic_DNA"/>
</dbReference>
<dbReference type="RefSeq" id="WP_011672457.1">
    <property type="nucleotide sequence ID" value="NC_008513.1"/>
</dbReference>
<dbReference type="SMR" id="Q058B1"/>
<dbReference type="STRING" id="372461.BCc_060"/>
<dbReference type="KEGG" id="bcc:BCc_060"/>
<dbReference type="eggNOG" id="COG0329">
    <property type="taxonomic scope" value="Bacteria"/>
</dbReference>
<dbReference type="HOGENOM" id="CLU_049343_7_0_6"/>
<dbReference type="OrthoDB" id="9782828at2"/>
<dbReference type="UniPathway" id="UPA00034">
    <property type="reaction ID" value="UER00017"/>
</dbReference>
<dbReference type="Proteomes" id="UP000000669">
    <property type="component" value="Chromosome"/>
</dbReference>
<dbReference type="GO" id="GO:0005829">
    <property type="term" value="C:cytosol"/>
    <property type="evidence" value="ECO:0007669"/>
    <property type="project" value="TreeGrafter"/>
</dbReference>
<dbReference type="GO" id="GO:0008840">
    <property type="term" value="F:4-hydroxy-tetrahydrodipicolinate synthase activity"/>
    <property type="evidence" value="ECO:0007669"/>
    <property type="project" value="UniProtKB-UniRule"/>
</dbReference>
<dbReference type="GO" id="GO:0019877">
    <property type="term" value="P:diaminopimelate biosynthetic process"/>
    <property type="evidence" value="ECO:0007669"/>
    <property type="project" value="UniProtKB-UniRule"/>
</dbReference>
<dbReference type="GO" id="GO:0009089">
    <property type="term" value="P:lysine biosynthetic process via diaminopimelate"/>
    <property type="evidence" value="ECO:0007669"/>
    <property type="project" value="UniProtKB-UniRule"/>
</dbReference>
<dbReference type="CDD" id="cd00950">
    <property type="entry name" value="DHDPS"/>
    <property type="match status" value="1"/>
</dbReference>
<dbReference type="Gene3D" id="3.20.20.70">
    <property type="entry name" value="Aldolase class I"/>
    <property type="match status" value="1"/>
</dbReference>
<dbReference type="HAMAP" id="MF_00418">
    <property type="entry name" value="DapA"/>
    <property type="match status" value="1"/>
</dbReference>
<dbReference type="InterPro" id="IPR013785">
    <property type="entry name" value="Aldolase_TIM"/>
</dbReference>
<dbReference type="InterPro" id="IPR005263">
    <property type="entry name" value="DapA"/>
</dbReference>
<dbReference type="InterPro" id="IPR002220">
    <property type="entry name" value="DapA-like"/>
</dbReference>
<dbReference type="InterPro" id="IPR020625">
    <property type="entry name" value="Schiff_base-form_aldolases_AS"/>
</dbReference>
<dbReference type="InterPro" id="IPR020624">
    <property type="entry name" value="Schiff_base-form_aldolases_CS"/>
</dbReference>
<dbReference type="NCBIfam" id="TIGR00674">
    <property type="entry name" value="dapA"/>
    <property type="match status" value="1"/>
</dbReference>
<dbReference type="PANTHER" id="PTHR12128:SF66">
    <property type="entry name" value="4-HYDROXY-2-OXOGLUTARATE ALDOLASE, MITOCHONDRIAL"/>
    <property type="match status" value="1"/>
</dbReference>
<dbReference type="PANTHER" id="PTHR12128">
    <property type="entry name" value="DIHYDRODIPICOLINATE SYNTHASE"/>
    <property type="match status" value="1"/>
</dbReference>
<dbReference type="Pfam" id="PF00701">
    <property type="entry name" value="DHDPS"/>
    <property type="match status" value="1"/>
</dbReference>
<dbReference type="PIRSF" id="PIRSF001365">
    <property type="entry name" value="DHDPS"/>
    <property type="match status" value="1"/>
</dbReference>
<dbReference type="PRINTS" id="PR00146">
    <property type="entry name" value="DHPICSNTHASE"/>
</dbReference>
<dbReference type="SMART" id="SM01130">
    <property type="entry name" value="DHDPS"/>
    <property type="match status" value="1"/>
</dbReference>
<dbReference type="SUPFAM" id="SSF51569">
    <property type="entry name" value="Aldolase"/>
    <property type="match status" value="1"/>
</dbReference>
<dbReference type="PROSITE" id="PS00665">
    <property type="entry name" value="DHDPS_1"/>
    <property type="match status" value="1"/>
</dbReference>
<dbReference type="PROSITE" id="PS00666">
    <property type="entry name" value="DHDPS_2"/>
    <property type="match status" value="1"/>
</dbReference>
<gene>
    <name evidence="1" type="primary">dapA</name>
    <name type="ordered locus">BCc_060</name>
</gene>
<proteinExistence type="inferred from homology"/>
<feature type="chain" id="PRO_1000050169" description="4-hydroxy-tetrahydrodipicolinate synthase">
    <location>
        <begin position="1"/>
        <end position="297"/>
    </location>
</feature>
<feature type="active site" description="Proton donor/acceptor" evidence="1">
    <location>
        <position position="133"/>
    </location>
</feature>
<feature type="active site" description="Schiff-base intermediate with substrate" evidence="1">
    <location>
        <position position="161"/>
    </location>
</feature>
<feature type="binding site" evidence="1">
    <location>
        <position position="45"/>
    </location>
    <ligand>
        <name>pyruvate</name>
        <dbReference type="ChEBI" id="CHEBI:15361"/>
    </ligand>
</feature>
<feature type="binding site" evidence="1">
    <location>
        <position position="203"/>
    </location>
    <ligand>
        <name>pyruvate</name>
        <dbReference type="ChEBI" id="CHEBI:15361"/>
    </ligand>
</feature>
<feature type="site" description="Part of a proton relay during catalysis" evidence="1">
    <location>
        <position position="44"/>
    </location>
</feature>
<feature type="site" description="Part of a proton relay during catalysis" evidence="1">
    <location>
        <position position="107"/>
    </location>
</feature>
<organism>
    <name type="scientific">Buchnera aphidicola subsp. Cinara cedri (strain Cc)</name>
    <dbReference type="NCBI Taxonomy" id="372461"/>
    <lineage>
        <taxon>Bacteria</taxon>
        <taxon>Pseudomonadati</taxon>
        <taxon>Pseudomonadota</taxon>
        <taxon>Gammaproteobacteria</taxon>
        <taxon>Enterobacterales</taxon>
        <taxon>Erwiniaceae</taxon>
        <taxon>Buchnera</taxon>
    </lineage>
</organism>
<keyword id="KW-0028">Amino-acid biosynthesis</keyword>
<keyword id="KW-0963">Cytoplasm</keyword>
<keyword id="KW-0220">Diaminopimelate biosynthesis</keyword>
<keyword id="KW-0456">Lyase</keyword>
<keyword id="KW-0457">Lysine biosynthesis</keyword>
<keyword id="KW-1185">Reference proteome</keyword>
<keyword id="KW-0704">Schiff base</keyword>
<reference key="1">
    <citation type="journal article" date="2006" name="Science">
        <title>A small microbial genome: the end of a long symbiotic relationship?</title>
        <authorList>
            <person name="Perez-Brocal V."/>
            <person name="Gil R."/>
            <person name="Ramos S."/>
            <person name="Lamelas A."/>
            <person name="Postigo M."/>
            <person name="Michelena J.M."/>
            <person name="Silva F.J."/>
            <person name="Moya A."/>
            <person name="Latorre A."/>
        </authorList>
    </citation>
    <scope>NUCLEOTIDE SEQUENCE [LARGE SCALE GENOMIC DNA]</scope>
    <source>
        <strain>Cc</strain>
    </source>
</reference>
<accession>Q058B1</accession>
<evidence type="ECO:0000255" key="1">
    <source>
        <dbReference type="HAMAP-Rule" id="MF_00418"/>
    </source>
</evidence>
<evidence type="ECO:0000305" key="2"/>
<sequence length="297" mass="32906">MFKGSIVALITPMDIKGNICKKSLKKLVKYHIKNKTNAIISVGTTGESATLNKNEHTNVIMHTLEYADEKIPIIAGTGSNATSESILLTKKLELSGISGCLNITPYYNKPTQEGLYLHFKSISESTDLPQILYNVPHRTGCDLLPQTIAKLAKFKNIIGLKDASGDLSRVNQIKSLVNKNFILISGDDTTALDFIQLGGNGVISVTANIAARHISKICKLALAGNFYKARKINEKLKILHNLLFKETNPIPIKWAAKYIGLIETDKIRLPMTQLLDKNKKNLKKIINLLQLNKNKFL</sequence>
<comment type="function">
    <text evidence="1">Catalyzes the condensation of (S)-aspartate-beta-semialdehyde [(S)-ASA] and pyruvate to 4-hydroxy-tetrahydrodipicolinate (HTPA).</text>
</comment>
<comment type="catalytic activity">
    <reaction evidence="1">
        <text>L-aspartate 4-semialdehyde + pyruvate = (2S,4S)-4-hydroxy-2,3,4,5-tetrahydrodipicolinate + H2O + H(+)</text>
        <dbReference type="Rhea" id="RHEA:34171"/>
        <dbReference type="ChEBI" id="CHEBI:15361"/>
        <dbReference type="ChEBI" id="CHEBI:15377"/>
        <dbReference type="ChEBI" id="CHEBI:15378"/>
        <dbReference type="ChEBI" id="CHEBI:67139"/>
        <dbReference type="ChEBI" id="CHEBI:537519"/>
        <dbReference type="EC" id="4.3.3.7"/>
    </reaction>
</comment>
<comment type="pathway">
    <text evidence="1">Amino-acid biosynthesis; L-lysine biosynthesis via DAP pathway; (S)-tetrahydrodipicolinate from L-aspartate: step 3/4.</text>
</comment>
<comment type="subunit">
    <text evidence="1">Homotetramer; dimer of dimers.</text>
</comment>
<comment type="subcellular location">
    <subcellularLocation>
        <location evidence="1">Cytoplasm</location>
    </subcellularLocation>
</comment>
<comment type="similarity">
    <text evidence="1">Belongs to the DapA family.</text>
</comment>
<comment type="caution">
    <text evidence="2">Was originally thought to be a dihydrodipicolinate synthase (DHDPS), catalyzing the condensation of (S)-aspartate-beta-semialdehyde [(S)-ASA] and pyruvate to dihydrodipicolinate (DHDP). However, it was shown in E.coli that the product of the enzymatic reaction is not dihydrodipicolinate but in fact (4S)-4-hydroxy-2,3,4,5-tetrahydro-(2S)-dipicolinic acid (HTPA), and that the consecutive dehydration reaction leading to DHDP is not spontaneous but catalyzed by DapB.</text>
</comment>